<evidence type="ECO:0000255" key="1">
    <source>
        <dbReference type="PROSITE-ProRule" id="PRU00448"/>
    </source>
</evidence>
<evidence type="ECO:0000269" key="2">
    <source>
    </source>
</evidence>
<evidence type="ECO:0000269" key="3">
    <source>
    </source>
</evidence>
<evidence type="ECO:0000303" key="4">
    <source>
    </source>
</evidence>
<evidence type="ECO:0000303" key="5">
    <source>
    </source>
</evidence>
<evidence type="ECO:0007829" key="6">
    <source>
        <dbReference type="PDB" id="1JUO"/>
    </source>
</evidence>
<evidence type="ECO:0007829" key="7">
    <source>
        <dbReference type="PDB" id="2JC2"/>
    </source>
</evidence>
<evidence type="ECO:0007829" key="8">
    <source>
        <dbReference type="PDB" id="4UPG"/>
    </source>
</evidence>
<evidence type="ECO:0007829" key="9">
    <source>
        <dbReference type="PDB" id="4USL"/>
    </source>
</evidence>
<protein>
    <recommendedName>
        <fullName>Sorcin</fullName>
    </recommendedName>
    <alternativeName>
        <fullName>22 kDa protein</fullName>
    </alternativeName>
    <alternativeName>
        <fullName>CP-22</fullName>
        <shortName>CP22</shortName>
    </alternativeName>
    <alternativeName>
        <fullName>V19</fullName>
    </alternativeName>
</protein>
<reference key="1">
    <citation type="journal article" date="1995" name="Biochim. Biophys. Acta">
        <title>Isolation and molecular cloning of human sorcin a calcium-binding protein in vincristine-resistant HOB1 lymphoma cells.</title>
        <authorList>
            <person name="Wang S.L."/>
            <person name="Tam M.F."/>
            <person name="Ho Y.S."/>
            <person name="Pai S.H."/>
            <person name="Kao M.C."/>
        </authorList>
    </citation>
    <scope>NUCLEOTIDE SEQUENCE [MRNA] (ISOFORM 1)</scope>
</reference>
<reference key="2">
    <citation type="journal article" date="1996" name="Arch. Biochem. Biophys.">
        <title>Purification, cDNA cloning, and expression of human sorcin in vincristine-resistant HOB1 lymphoma cell lines.</title>
        <authorList>
            <person name="Lee W.P."/>
        </authorList>
    </citation>
    <scope>NUCLEOTIDE SEQUENCE [MRNA] (ISOFORM 1)</scope>
</reference>
<reference key="3">
    <citation type="submission" date="1990-03" db="EMBL/GenBank/DDBJ databases">
        <title>Isolation of the cDNA clone for human CP22 overexpressed in multidrug-resistant cell lines.</title>
        <authorList>
            <person name="Sugimoto Y."/>
            <person name="Asami N."/>
            <person name="Okochi E."/>
            <person name="Ogura M."/>
            <person name="Tsuruo T."/>
        </authorList>
    </citation>
    <scope>NUCLEOTIDE SEQUENCE [MRNA] (ISOFORM 1)</scope>
</reference>
<reference key="4">
    <citation type="journal article" date="2004" name="Nat. Genet.">
        <title>Complete sequencing and characterization of 21,243 full-length human cDNAs.</title>
        <authorList>
            <person name="Ota T."/>
            <person name="Suzuki Y."/>
            <person name="Nishikawa T."/>
            <person name="Otsuki T."/>
            <person name="Sugiyama T."/>
            <person name="Irie R."/>
            <person name="Wakamatsu A."/>
            <person name="Hayashi K."/>
            <person name="Sato H."/>
            <person name="Nagai K."/>
            <person name="Kimura K."/>
            <person name="Makita H."/>
            <person name="Sekine M."/>
            <person name="Obayashi M."/>
            <person name="Nishi T."/>
            <person name="Shibahara T."/>
            <person name="Tanaka T."/>
            <person name="Ishii S."/>
            <person name="Yamamoto J."/>
            <person name="Saito K."/>
            <person name="Kawai Y."/>
            <person name="Isono Y."/>
            <person name="Nakamura Y."/>
            <person name="Nagahari K."/>
            <person name="Murakami K."/>
            <person name="Yasuda T."/>
            <person name="Iwayanagi T."/>
            <person name="Wagatsuma M."/>
            <person name="Shiratori A."/>
            <person name="Sudo H."/>
            <person name="Hosoiri T."/>
            <person name="Kaku Y."/>
            <person name="Kodaira H."/>
            <person name="Kondo H."/>
            <person name="Sugawara M."/>
            <person name="Takahashi M."/>
            <person name="Kanda K."/>
            <person name="Yokoi T."/>
            <person name="Furuya T."/>
            <person name="Kikkawa E."/>
            <person name="Omura Y."/>
            <person name="Abe K."/>
            <person name="Kamihara K."/>
            <person name="Katsuta N."/>
            <person name="Sato K."/>
            <person name="Tanikawa M."/>
            <person name="Yamazaki M."/>
            <person name="Ninomiya K."/>
            <person name="Ishibashi T."/>
            <person name="Yamashita H."/>
            <person name="Murakawa K."/>
            <person name="Fujimori K."/>
            <person name="Tanai H."/>
            <person name="Kimata M."/>
            <person name="Watanabe M."/>
            <person name="Hiraoka S."/>
            <person name="Chiba Y."/>
            <person name="Ishida S."/>
            <person name="Ono Y."/>
            <person name="Takiguchi S."/>
            <person name="Watanabe S."/>
            <person name="Yosida M."/>
            <person name="Hotuta T."/>
            <person name="Kusano J."/>
            <person name="Kanehori K."/>
            <person name="Takahashi-Fujii A."/>
            <person name="Hara H."/>
            <person name="Tanase T.-O."/>
            <person name="Nomura Y."/>
            <person name="Togiya S."/>
            <person name="Komai F."/>
            <person name="Hara R."/>
            <person name="Takeuchi K."/>
            <person name="Arita M."/>
            <person name="Imose N."/>
            <person name="Musashino K."/>
            <person name="Yuuki H."/>
            <person name="Oshima A."/>
            <person name="Sasaki N."/>
            <person name="Aotsuka S."/>
            <person name="Yoshikawa Y."/>
            <person name="Matsunawa H."/>
            <person name="Ichihara T."/>
            <person name="Shiohata N."/>
            <person name="Sano S."/>
            <person name="Moriya S."/>
            <person name="Momiyama H."/>
            <person name="Satoh N."/>
            <person name="Takami S."/>
            <person name="Terashima Y."/>
            <person name="Suzuki O."/>
            <person name="Nakagawa S."/>
            <person name="Senoh A."/>
            <person name="Mizoguchi H."/>
            <person name="Goto Y."/>
            <person name="Shimizu F."/>
            <person name="Wakebe H."/>
            <person name="Hishigaki H."/>
            <person name="Watanabe T."/>
            <person name="Sugiyama A."/>
            <person name="Takemoto M."/>
            <person name="Kawakami B."/>
            <person name="Yamazaki M."/>
            <person name="Watanabe K."/>
            <person name="Kumagai A."/>
            <person name="Itakura S."/>
            <person name="Fukuzumi Y."/>
            <person name="Fujimori Y."/>
            <person name="Komiyama M."/>
            <person name="Tashiro H."/>
            <person name="Tanigami A."/>
            <person name="Fujiwara T."/>
            <person name="Ono T."/>
            <person name="Yamada K."/>
            <person name="Fujii Y."/>
            <person name="Ozaki K."/>
            <person name="Hirao M."/>
            <person name="Ohmori Y."/>
            <person name="Kawabata A."/>
            <person name="Hikiji T."/>
            <person name="Kobatake N."/>
            <person name="Inagaki H."/>
            <person name="Ikema Y."/>
            <person name="Okamoto S."/>
            <person name="Okitani R."/>
            <person name="Kawakami T."/>
            <person name="Noguchi S."/>
            <person name="Itoh T."/>
            <person name="Shigeta K."/>
            <person name="Senba T."/>
            <person name="Matsumura K."/>
            <person name="Nakajima Y."/>
            <person name="Mizuno T."/>
            <person name="Morinaga M."/>
            <person name="Sasaki M."/>
            <person name="Togashi T."/>
            <person name="Oyama M."/>
            <person name="Hata H."/>
            <person name="Watanabe M."/>
            <person name="Komatsu T."/>
            <person name="Mizushima-Sugano J."/>
            <person name="Satoh T."/>
            <person name="Shirai Y."/>
            <person name="Takahashi Y."/>
            <person name="Nakagawa K."/>
            <person name="Okumura K."/>
            <person name="Nagase T."/>
            <person name="Nomura N."/>
            <person name="Kikuchi H."/>
            <person name="Masuho Y."/>
            <person name="Yamashita R."/>
            <person name="Nakai K."/>
            <person name="Yada T."/>
            <person name="Nakamura Y."/>
            <person name="Ohara O."/>
            <person name="Isogai T."/>
            <person name="Sugano S."/>
        </authorList>
    </citation>
    <scope>NUCLEOTIDE SEQUENCE [LARGE SCALE MRNA] (ISOFORM 3)</scope>
    <source>
        <tissue>Colon</tissue>
    </source>
</reference>
<reference key="5">
    <citation type="journal article" date="2005" name="Mamm. Genome">
        <title>Transcriptome analysis of human gastric cancer.</title>
        <authorList>
            <person name="Oh J.H."/>
            <person name="Yang J.O."/>
            <person name="Hahn Y."/>
            <person name="Kim M.R."/>
            <person name="Byun S.S."/>
            <person name="Jeon Y.J."/>
            <person name="Kim J.M."/>
            <person name="Song K.S."/>
            <person name="Noh S.M."/>
            <person name="Kim S."/>
            <person name="Yoo H.S."/>
            <person name="Kim Y.S."/>
            <person name="Kim N.S."/>
        </authorList>
    </citation>
    <scope>NUCLEOTIDE SEQUENCE [LARGE SCALE MRNA] (ISOFORM 2)</scope>
    <source>
        <tissue>Ascites</tissue>
    </source>
</reference>
<reference key="6">
    <citation type="journal article" date="2003" name="Nature">
        <title>The DNA sequence of human chromosome 7.</title>
        <authorList>
            <person name="Hillier L.W."/>
            <person name="Fulton R.S."/>
            <person name="Fulton L.A."/>
            <person name="Graves T.A."/>
            <person name="Pepin K.H."/>
            <person name="Wagner-McPherson C."/>
            <person name="Layman D."/>
            <person name="Maas J."/>
            <person name="Jaeger S."/>
            <person name="Walker R."/>
            <person name="Wylie K."/>
            <person name="Sekhon M."/>
            <person name="Becker M.C."/>
            <person name="O'Laughlin M.D."/>
            <person name="Schaller M.E."/>
            <person name="Fewell G.A."/>
            <person name="Delehaunty K.D."/>
            <person name="Miner T.L."/>
            <person name="Nash W.E."/>
            <person name="Cordes M."/>
            <person name="Du H."/>
            <person name="Sun H."/>
            <person name="Edwards J."/>
            <person name="Bradshaw-Cordum H."/>
            <person name="Ali J."/>
            <person name="Andrews S."/>
            <person name="Isak A."/>
            <person name="Vanbrunt A."/>
            <person name="Nguyen C."/>
            <person name="Du F."/>
            <person name="Lamar B."/>
            <person name="Courtney L."/>
            <person name="Kalicki J."/>
            <person name="Ozersky P."/>
            <person name="Bielicki L."/>
            <person name="Scott K."/>
            <person name="Holmes A."/>
            <person name="Harkins R."/>
            <person name="Harris A."/>
            <person name="Strong C.M."/>
            <person name="Hou S."/>
            <person name="Tomlinson C."/>
            <person name="Dauphin-Kohlberg S."/>
            <person name="Kozlowicz-Reilly A."/>
            <person name="Leonard S."/>
            <person name="Rohlfing T."/>
            <person name="Rock S.M."/>
            <person name="Tin-Wollam A.-M."/>
            <person name="Abbott A."/>
            <person name="Minx P."/>
            <person name="Maupin R."/>
            <person name="Strowmatt C."/>
            <person name="Latreille P."/>
            <person name="Miller N."/>
            <person name="Johnson D."/>
            <person name="Murray J."/>
            <person name="Woessner J.P."/>
            <person name="Wendl M.C."/>
            <person name="Yang S.-P."/>
            <person name="Schultz B.R."/>
            <person name="Wallis J.W."/>
            <person name="Spieth J."/>
            <person name="Bieri T.A."/>
            <person name="Nelson J.O."/>
            <person name="Berkowicz N."/>
            <person name="Wohldmann P.E."/>
            <person name="Cook L.L."/>
            <person name="Hickenbotham M.T."/>
            <person name="Eldred J."/>
            <person name="Williams D."/>
            <person name="Bedell J.A."/>
            <person name="Mardis E.R."/>
            <person name="Clifton S.W."/>
            <person name="Chissoe S.L."/>
            <person name="Marra M.A."/>
            <person name="Raymond C."/>
            <person name="Haugen E."/>
            <person name="Gillett W."/>
            <person name="Zhou Y."/>
            <person name="James R."/>
            <person name="Phelps K."/>
            <person name="Iadanoto S."/>
            <person name="Bubb K."/>
            <person name="Simms E."/>
            <person name="Levy R."/>
            <person name="Clendenning J."/>
            <person name="Kaul R."/>
            <person name="Kent W.J."/>
            <person name="Furey T.S."/>
            <person name="Baertsch R.A."/>
            <person name="Brent M.R."/>
            <person name="Keibler E."/>
            <person name="Flicek P."/>
            <person name="Bork P."/>
            <person name="Suyama M."/>
            <person name="Bailey J.A."/>
            <person name="Portnoy M.E."/>
            <person name="Torrents D."/>
            <person name="Chinwalla A.T."/>
            <person name="Gish W.R."/>
            <person name="Eddy S.R."/>
            <person name="McPherson J.D."/>
            <person name="Olson M.V."/>
            <person name="Eichler E.E."/>
            <person name="Green E.D."/>
            <person name="Waterston R.H."/>
            <person name="Wilson R.K."/>
        </authorList>
    </citation>
    <scope>NUCLEOTIDE SEQUENCE [LARGE SCALE GENOMIC DNA]</scope>
</reference>
<reference key="7">
    <citation type="submission" date="2005-09" db="EMBL/GenBank/DDBJ databases">
        <authorList>
            <person name="Mural R.J."/>
            <person name="Istrail S."/>
            <person name="Sutton G.G."/>
            <person name="Florea L."/>
            <person name="Halpern A.L."/>
            <person name="Mobarry C.M."/>
            <person name="Lippert R."/>
            <person name="Walenz B."/>
            <person name="Shatkay H."/>
            <person name="Dew I."/>
            <person name="Miller J.R."/>
            <person name="Flanigan M.J."/>
            <person name="Edwards N.J."/>
            <person name="Bolanos R."/>
            <person name="Fasulo D."/>
            <person name="Halldorsson B.V."/>
            <person name="Hannenhalli S."/>
            <person name="Turner R."/>
            <person name="Yooseph S."/>
            <person name="Lu F."/>
            <person name="Nusskern D.R."/>
            <person name="Shue B.C."/>
            <person name="Zheng X.H."/>
            <person name="Zhong F."/>
            <person name="Delcher A.L."/>
            <person name="Huson D.H."/>
            <person name="Kravitz S.A."/>
            <person name="Mouchard L."/>
            <person name="Reinert K."/>
            <person name="Remington K.A."/>
            <person name="Clark A.G."/>
            <person name="Waterman M.S."/>
            <person name="Eichler E.E."/>
            <person name="Adams M.D."/>
            <person name="Hunkapiller M.W."/>
            <person name="Myers E.W."/>
            <person name="Venter J.C."/>
        </authorList>
    </citation>
    <scope>NUCLEOTIDE SEQUENCE [LARGE SCALE GENOMIC DNA]</scope>
</reference>
<reference key="8">
    <citation type="journal article" date="2004" name="Genome Res.">
        <title>The status, quality, and expansion of the NIH full-length cDNA project: the Mammalian Gene Collection (MGC).</title>
        <authorList>
            <consortium name="The MGC Project Team"/>
        </authorList>
    </citation>
    <scope>NUCLEOTIDE SEQUENCE [LARGE SCALE MRNA] (ISOFORM 1)</scope>
    <source>
        <tissue>Brain</tissue>
    </source>
</reference>
<reference key="9">
    <citation type="submission" date="2008-12" db="UniProtKB">
        <authorList>
            <person name="Lubec G."/>
            <person name="Chen W.-Q."/>
            <person name="Sun Y."/>
        </authorList>
    </citation>
    <scope>PROTEIN SEQUENCE OF 57-116; 128-135 AND 154-165</scope>
    <scope>IDENTIFICATION BY MASS SPECTROMETRY</scope>
    <source>
        <tissue>Fetal brain cortex</tissue>
    </source>
</reference>
<reference key="10">
    <citation type="journal article" date="1992" name="Electrophoresis">
        <title>Microsequences of 145 proteins recorded in the two-dimensional gel protein database of normal human epidermal keratinocytes.</title>
        <authorList>
            <person name="Rasmussen H.H."/>
            <person name="van Damme J."/>
            <person name="Puype M."/>
            <person name="Gesser B."/>
            <person name="Celis J.E."/>
            <person name="Vandekerckhove J."/>
        </authorList>
    </citation>
    <scope>PROTEIN SEQUENCE OF 128-135 AND 154-165</scope>
    <source>
        <tissue>Keratinocyte</tissue>
    </source>
</reference>
<reference key="11">
    <citation type="journal article" date="2003" name="FEBS Lett.">
        <title>The PEF family proteins sorcin and grancalcin interact in vivo and in vitro.</title>
        <authorList>
            <person name="Hansen C."/>
            <person name="Tarabykina S."/>
            <person name="la Cour J.M."/>
            <person name="Lollike K."/>
            <person name="Berchtold M.W."/>
        </authorList>
    </citation>
    <scope>INTERACTION WITH GCA</scope>
</reference>
<reference key="12">
    <citation type="journal article" date="2011" name="BMC Syst. Biol.">
        <title>Initial characterization of the human central proteome.</title>
        <authorList>
            <person name="Burkard T.R."/>
            <person name="Planyavsky M."/>
            <person name="Kaupe I."/>
            <person name="Breitwieser F.P."/>
            <person name="Buerckstuemmer T."/>
            <person name="Bennett K.L."/>
            <person name="Superti-Furga G."/>
            <person name="Colinge J."/>
        </authorList>
    </citation>
    <scope>IDENTIFICATION BY MASS SPECTROMETRY [LARGE SCALE ANALYSIS]</scope>
</reference>
<reference key="13">
    <citation type="journal article" date="2014" name="J. Proteomics">
        <title>An enzyme assisted RP-RPLC approach for in-depth analysis of human liver phosphoproteome.</title>
        <authorList>
            <person name="Bian Y."/>
            <person name="Song C."/>
            <person name="Cheng K."/>
            <person name="Dong M."/>
            <person name="Wang F."/>
            <person name="Huang J."/>
            <person name="Sun D."/>
            <person name="Wang L."/>
            <person name="Ye M."/>
            <person name="Zou H."/>
        </authorList>
    </citation>
    <scope>IDENTIFICATION BY MASS SPECTROMETRY [LARGE SCALE ANALYSIS]</scope>
    <source>
        <tissue>Liver</tissue>
    </source>
</reference>
<reference key="14">
    <citation type="journal article" date="2015" name="Proteomics">
        <title>N-terminome analysis of the human mitochondrial proteome.</title>
        <authorList>
            <person name="Vaca Jacome A.S."/>
            <person name="Rabilloud T."/>
            <person name="Schaeffer-Reiss C."/>
            <person name="Rompais M."/>
            <person name="Ayoub D."/>
            <person name="Lane L."/>
            <person name="Bairoch A."/>
            <person name="Van Dorsselaer A."/>
            <person name="Carapito C."/>
        </authorList>
    </citation>
    <scope>IDENTIFICATION BY MASS SPECTROMETRY [LARGE SCALE ANALYSIS]</scope>
</reference>
<reference key="15">
    <citation type="journal article" date="2001" name="Protein Sci.">
        <title>Crystal structure of calcium-free human sorcin: a member of the penta-EF-hand protein family.</title>
        <authorList>
            <person name="Xie X."/>
            <person name="Dwyer M.D."/>
            <person name="Swenson L."/>
            <person name="Parker M.H."/>
            <person name="Botfield M.C."/>
        </authorList>
    </citation>
    <scope>X-RAY CRYSTALLOGRAPHY (2.2 ANGSTROMS)</scope>
</reference>
<reference key="16">
    <citation type="journal article" date="2008" name="FASEB J.">
        <title>Molecular basis for the impaired function of the natural F112L sorcin mutant: X-ray crystal structure, calcium affinity, and interaction with annexin VII and the ryanodine receptor.</title>
        <authorList>
            <person name="Franceschini S."/>
            <person name="Ilari A."/>
            <person name="Verzili D."/>
            <person name="Zamparelli C."/>
            <person name="Antaramian A."/>
            <person name="Rueda A."/>
            <person name="Valdivia H.H."/>
            <person name="Chiancone E."/>
            <person name="Colotti G."/>
        </authorList>
    </citation>
    <scope>X-RAY CRYSTALLOGRAPHY (2.5 ANGSTROMS) OF MUTANT LEU-112</scope>
    <scope>SUBUNIT</scope>
    <scope>FUNCTION</scope>
    <scope>CALCIUM-BINDING</scope>
    <scope>INTERACTION WITH RYR2 AND ANXA7</scope>
</reference>
<keyword id="KW-0002">3D-structure</keyword>
<keyword id="KW-0025">Alternative splicing</keyword>
<keyword id="KW-0106">Calcium</keyword>
<keyword id="KW-0963">Cytoplasm</keyword>
<keyword id="KW-0903">Direct protein sequencing</keyword>
<keyword id="KW-0472">Membrane</keyword>
<keyword id="KW-0479">Metal-binding</keyword>
<keyword id="KW-1267">Proteomics identification</keyword>
<keyword id="KW-1185">Reference proteome</keyword>
<keyword id="KW-0677">Repeat</keyword>
<keyword id="KW-0703">Sarcoplasmic reticulum</keyword>
<dbReference type="EMBL" id="L12387">
    <property type="protein sequence ID" value="AAA92155.1"/>
    <property type="molecule type" value="mRNA"/>
</dbReference>
<dbReference type="EMBL" id="M32886">
    <property type="protein sequence ID" value="AAA60588.1"/>
    <property type="molecule type" value="mRNA"/>
</dbReference>
<dbReference type="EMBL" id="AK296601">
    <property type="protein sequence ID" value="BAG59214.1"/>
    <property type="molecule type" value="mRNA"/>
</dbReference>
<dbReference type="EMBL" id="BM739144">
    <property type="status" value="NOT_ANNOTATED_CDS"/>
    <property type="molecule type" value="mRNA"/>
</dbReference>
<dbReference type="EMBL" id="AC003991">
    <property type="status" value="NOT_ANNOTATED_CDS"/>
    <property type="molecule type" value="Genomic_DNA"/>
</dbReference>
<dbReference type="EMBL" id="AC005075">
    <property type="status" value="NOT_ANNOTATED_CDS"/>
    <property type="molecule type" value="Genomic_DNA"/>
</dbReference>
<dbReference type="EMBL" id="CH471091">
    <property type="protein sequence ID" value="EAW76909.1"/>
    <property type="molecule type" value="Genomic_DNA"/>
</dbReference>
<dbReference type="EMBL" id="CH471091">
    <property type="protein sequence ID" value="EAW76910.1"/>
    <property type="molecule type" value="Genomic_DNA"/>
</dbReference>
<dbReference type="EMBL" id="BC011025">
    <property type="protein sequence ID" value="AAH11025.1"/>
    <property type="molecule type" value="mRNA"/>
</dbReference>
<dbReference type="CCDS" id="CCDS47638.1">
    <molecule id="P30626-2"/>
</dbReference>
<dbReference type="CCDS" id="CCDS5612.1">
    <molecule id="P30626-1"/>
</dbReference>
<dbReference type="CCDS" id="CCDS59063.1">
    <molecule id="P30626-3"/>
</dbReference>
<dbReference type="PIR" id="S52094">
    <property type="entry name" value="S52094"/>
</dbReference>
<dbReference type="RefSeq" id="NP_001243820.1">
    <property type="nucleotide sequence ID" value="NM_001256891.1"/>
</dbReference>
<dbReference type="RefSeq" id="NP_001243821.1">
    <molecule id="P30626-3"/>
    <property type="nucleotide sequence ID" value="NM_001256892.2"/>
</dbReference>
<dbReference type="RefSeq" id="NP_003121.1">
    <molecule id="P30626-1"/>
    <property type="nucleotide sequence ID" value="NM_003130.4"/>
</dbReference>
<dbReference type="RefSeq" id="NP_944490.1">
    <molecule id="P30626-2"/>
    <property type="nucleotide sequence ID" value="NM_198901.2"/>
</dbReference>
<dbReference type="PDB" id="1JUO">
    <property type="method" value="X-ray"/>
    <property type="resolution" value="2.20 A"/>
    <property type="chains" value="A/B=1-198"/>
</dbReference>
<dbReference type="PDB" id="2JC2">
    <property type="method" value="X-ray"/>
    <property type="resolution" value="2.50 A"/>
    <property type="chains" value="A/B/C/D=1-198"/>
</dbReference>
<dbReference type="PDB" id="4U8D">
    <property type="method" value="X-ray"/>
    <property type="resolution" value="2.30 A"/>
    <property type="chains" value="A/B=1-198"/>
</dbReference>
<dbReference type="PDB" id="4UPG">
    <property type="method" value="X-ray"/>
    <property type="resolution" value="2.10 A"/>
    <property type="chains" value="A=30-198"/>
</dbReference>
<dbReference type="PDB" id="4USL">
    <property type="method" value="X-ray"/>
    <property type="resolution" value="1.65 A"/>
    <property type="chains" value="A=1-198, D=1-32"/>
</dbReference>
<dbReference type="PDB" id="5MRA">
    <property type="method" value="X-ray"/>
    <property type="resolution" value="3.74 A"/>
    <property type="chains" value="A/B/C/D=32-198"/>
</dbReference>
<dbReference type="PDBsum" id="1JUO"/>
<dbReference type="PDBsum" id="2JC2"/>
<dbReference type="PDBsum" id="4U8D"/>
<dbReference type="PDBsum" id="4UPG"/>
<dbReference type="PDBsum" id="4USL"/>
<dbReference type="PDBsum" id="5MRA"/>
<dbReference type="SMR" id="P30626"/>
<dbReference type="BioGRID" id="112595">
    <property type="interactions" value="78"/>
</dbReference>
<dbReference type="CORUM" id="P30626"/>
<dbReference type="DIP" id="DIP-40970N"/>
<dbReference type="FunCoup" id="P30626">
    <property type="interactions" value="902"/>
</dbReference>
<dbReference type="IntAct" id="P30626">
    <property type="interactions" value="28"/>
</dbReference>
<dbReference type="MINT" id="P30626"/>
<dbReference type="STRING" id="9606.ENSP00000265729"/>
<dbReference type="DrugBank" id="DB11093">
    <property type="generic name" value="Calcium citrate"/>
</dbReference>
<dbReference type="DrugBank" id="DB11348">
    <property type="generic name" value="Calcium Phosphate"/>
</dbReference>
<dbReference type="DrugBank" id="DB14481">
    <property type="generic name" value="Calcium phosphate dihydrate"/>
</dbReference>
<dbReference type="GlyGen" id="P30626">
    <property type="glycosylation" value="1 site, 1 O-linked glycan (1 site)"/>
</dbReference>
<dbReference type="iPTMnet" id="P30626"/>
<dbReference type="MetOSite" id="P30626"/>
<dbReference type="PhosphoSitePlus" id="P30626"/>
<dbReference type="SwissPalm" id="P30626"/>
<dbReference type="BioMuta" id="SRI"/>
<dbReference type="DMDM" id="267021"/>
<dbReference type="OGP" id="P30626"/>
<dbReference type="jPOST" id="P30626"/>
<dbReference type="MassIVE" id="P30626"/>
<dbReference type="PaxDb" id="9606-ENSP00000265729"/>
<dbReference type="PeptideAtlas" id="P30626"/>
<dbReference type="ProteomicsDB" id="2025"/>
<dbReference type="ProteomicsDB" id="4466"/>
<dbReference type="ProteomicsDB" id="54730">
    <molecule id="P30626-1"/>
</dbReference>
<dbReference type="Pumba" id="P30626"/>
<dbReference type="TopDownProteomics" id="P30626-1">
    <molecule id="P30626-1"/>
</dbReference>
<dbReference type="Antibodypedia" id="29805">
    <property type="antibodies" value="194 antibodies from 31 providers"/>
</dbReference>
<dbReference type="DNASU" id="6717"/>
<dbReference type="Ensembl" id="ENST00000265729.7">
    <molecule id="P30626-1"/>
    <property type="protein sequence ID" value="ENSP00000265729.3"/>
    <property type="gene ID" value="ENSG00000075142.14"/>
</dbReference>
<dbReference type="Ensembl" id="ENST00000394641.7">
    <molecule id="P30626-2"/>
    <property type="protein sequence ID" value="ENSP00000378137.3"/>
    <property type="gene ID" value="ENSG00000075142.14"/>
</dbReference>
<dbReference type="Ensembl" id="ENST00000431660.5">
    <molecule id="P30626-3"/>
    <property type="protein sequence ID" value="ENSP00000391148.1"/>
    <property type="gene ID" value="ENSG00000075142.14"/>
</dbReference>
<dbReference type="GeneID" id="6717"/>
<dbReference type="KEGG" id="hsa:6717"/>
<dbReference type="MANE-Select" id="ENST00000265729.7">
    <property type="protein sequence ID" value="ENSP00000265729.3"/>
    <property type="RefSeq nucleotide sequence ID" value="NM_003130.4"/>
    <property type="RefSeq protein sequence ID" value="NP_003121.1"/>
</dbReference>
<dbReference type="UCSC" id="uc003ujq.3">
    <molecule id="P30626-1"/>
    <property type="organism name" value="human"/>
</dbReference>
<dbReference type="AGR" id="HGNC:11292"/>
<dbReference type="CTD" id="6717"/>
<dbReference type="DisGeNET" id="6717"/>
<dbReference type="GeneCards" id="SRI"/>
<dbReference type="HGNC" id="HGNC:11292">
    <property type="gene designation" value="SRI"/>
</dbReference>
<dbReference type="HPA" id="ENSG00000075142">
    <property type="expression patterns" value="Tissue enhanced (intestine)"/>
</dbReference>
<dbReference type="MIM" id="182520">
    <property type="type" value="gene"/>
</dbReference>
<dbReference type="neXtProt" id="NX_P30626"/>
<dbReference type="OpenTargets" id="ENSG00000075142"/>
<dbReference type="PharmGKB" id="PA36117"/>
<dbReference type="VEuPathDB" id="HostDB:ENSG00000075142"/>
<dbReference type="eggNOG" id="KOG0037">
    <property type="taxonomic scope" value="Eukaryota"/>
</dbReference>
<dbReference type="GeneTree" id="ENSGT00940000153979"/>
<dbReference type="InParanoid" id="P30626"/>
<dbReference type="OMA" id="LNQFIYC"/>
<dbReference type="OrthoDB" id="186625at2759"/>
<dbReference type="PAN-GO" id="P30626">
    <property type="GO annotations" value="0 GO annotations based on evolutionary models"/>
</dbReference>
<dbReference type="PhylomeDB" id="P30626"/>
<dbReference type="TreeFam" id="TF314682"/>
<dbReference type="PathwayCommons" id="P30626"/>
<dbReference type="Reactome" id="R-HSA-2672351">
    <property type="pathway name" value="Stimuli-sensing channels"/>
</dbReference>
<dbReference type="Reactome" id="R-HSA-418359">
    <property type="pathway name" value="Reduction of cytosolic Ca++ levels"/>
</dbReference>
<dbReference type="Reactome" id="R-HSA-425561">
    <property type="pathway name" value="Sodium/Calcium exchangers"/>
</dbReference>
<dbReference type="Reactome" id="R-HSA-5578775">
    <property type="pathway name" value="Ion homeostasis"/>
</dbReference>
<dbReference type="Reactome" id="R-HSA-936837">
    <property type="pathway name" value="Ion transport by P-type ATPases"/>
</dbReference>
<dbReference type="SignaLink" id="P30626"/>
<dbReference type="SIGNOR" id="P30626"/>
<dbReference type="BioGRID-ORCS" id="6717">
    <property type="hits" value="16 hits in 1151 CRISPR screens"/>
</dbReference>
<dbReference type="CD-CODE" id="DEE660B4">
    <property type="entry name" value="Stress granule"/>
</dbReference>
<dbReference type="CD-CODE" id="FB4E32DD">
    <property type="entry name" value="Presynaptic clusters and postsynaptic densities"/>
</dbReference>
<dbReference type="ChiTaRS" id="SRI">
    <property type="organism name" value="human"/>
</dbReference>
<dbReference type="EvolutionaryTrace" id="P30626"/>
<dbReference type="GeneWiki" id="SRI_(gene)"/>
<dbReference type="GenomeRNAi" id="6717"/>
<dbReference type="Pharos" id="P30626">
    <property type="development level" value="Tbio"/>
</dbReference>
<dbReference type="PRO" id="PR:P30626"/>
<dbReference type="Proteomes" id="UP000005640">
    <property type="component" value="Chromosome 7"/>
</dbReference>
<dbReference type="RNAct" id="P30626">
    <property type="molecule type" value="protein"/>
</dbReference>
<dbReference type="Bgee" id="ENSG00000075142">
    <property type="expression patterns" value="Expressed in mucosa of transverse colon and 208 other cell types or tissues"/>
</dbReference>
<dbReference type="ExpressionAtlas" id="P30626">
    <property type="expression patterns" value="baseline and differential"/>
</dbReference>
<dbReference type="GO" id="GO:0005737">
    <property type="term" value="C:cytoplasm"/>
    <property type="evidence" value="ECO:0000304"/>
    <property type="project" value="UniProtKB"/>
</dbReference>
<dbReference type="GO" id="GO:0005829">
    <property type="term" value="C:cytosol"/>
    <property type="evidence" value="ECO:0000314"/>
    <property type="project" value="BHF-UCL"/>
</dbReference>
<dbReference type="GO" id="GO:0005789">
    <property type="term" value="C:endoplasmic reticulum membrane"/>
    <property type="evidence" value="ECO:0000314"/>
    <property type="project" value="BHF-UCL"/>
</dbReference>
<dbReference type="GO" id="GO:0070062">
    <property type="term" value="C:extracellular exosome"/>
    <property type="evidence" value="ECO:0000314"/>
    <property type="project" value="UniProtKB"/>
</dbReference>
<dbReference type="GO" id="GO:0016020">
    <property type="term" value="C:membrane"/>
    <property type="evidence" value="ECO:0000314"/>
    <property type="project" value="BHF-UCL"/>
</dbReference>
<dbReference type="GO" id="GO:0005654">
    <property type="term" value="C:nucleoplasm"/>
    <property type="evidence" value="ECO:0000314"/>
    <property type="project" value="HPA"/>
</dbReference>
<dbReference type="GO" id="GO:0016529">
    <property type="term" value="C:sarcoplasmic reticulum"/>
    <property type="evidence" value="ECO:0000304"/>
    <property type="project" value="BHF-UCL"/>
</dbReference>
<dbReference type="GO" id="GO:0033017">
    <property type="term" value="C:sarcoplasmic reticulum membrane"/>
    <property type="evidence" value="ECO:0007669"/>
    <property type="project" value="UniProtKB-SubCell"/>
</dbReference>
<dbReference type="GO" id="GO:0030315">
    <property type="term" value="C:T-tubule"/>
    <property type="evidence" value="ECO:0000304"/>
    <property type="project" value="BHF-UCL"/>
</dbReference>
<dbReference type="GO" id="GO:0030018">
    <property type="term" value="C:Z disc"/>
    <property type="evidence" value="ECO:0000314"/>
    <property type="project" value="BHF-UCL"/>
</dbReference>
<dbReference type="GO" id="GO:0005246">
    <property type="term" value="F:calcium channel regulator activity"/>
    <property type="evidence" value="ECO:0000304"/>
    <property type="project" value="ProtInc"/>
</dbReference>
<dbReference type="GO" id="GO:0005509">
    <property type="term" value="F:calcium ion binding"/>
    <property type="evidence" value="ECO:0000314"/>
    <property type="project" value="BHF-UCL"/>
</dbReference>
<dbReference type="GO" id="GO:0140297">
    <property type="term" value="F:DNA-binding transcription factor binding"/>
    <property type="evidence" value="ECO:0000250"/>
    <property type="project" value="BHF-UCL"/>
</dbReference>
<dbReference type="GO" id="GO:0042802">
    <property type="term" value="F:identical protein binding"/>
    <property type="evidence" value="ECO:0000353"/>
    <property type="project" value="IntAct"/>
</dbReference>
<dbReference type="GO" id="GO:0002020">
    <property type="term" value="F:protease binding"/>
    <property type="evidence" value="ECO:0000353"/>
    <property type="project" value="BHF-UCL"/>
</dbReference>
<dbReference type="GO" id="GO:0046982">
    <property type="term" value="F:protein heterodimerization activity"/>
    <property type="evidence" value="ECO:0000353"/>
    <property type="project" value="BHF-UCL"/>
</dbReference>
<dbReference type="GO" id="GO:0140311">
    <property type="term" value="F:protein sequestering activity"/>
    <property type="evidence" value="ECO:0000250"/>
    <property type="project" value="BHF-UCL"/>
</dbReference>
<dbReference type="GO" id="GO:0005102">
    <property type="term" value="F:signaling receptor binding"/>
    <property type="evidence" value="ECO:0000304"/>
    <property type="project" value="ProtInc"/>
</dbReference>
<dbReference type="GO" id="GO:0140416">
    <property type="term" value="F:transcription regulator inhibitor activity"/>
    <property type="evidence" value="ECO:0000250"/>
    <property type="project" value="BHF-UCL"/>
</dbReference>
<dbReference type="GO" id="GO:0044325">
    <property type="term" value="F:transmembrane transporter binding"/>
    <property type="evidence" value="ECO:0000304"/>
    <property type="project" value="BHF-UCL"/>
</dbReference>
<dbReference type="GO" id="GO:0006816">
    <property type="term" value="P:calcium ion transport"/>
    <property type="evidence" value="ECO:0007669"/>
    <property type="project" value="Ensembl"/>
</dbReference>
<dbReference type="GO" id="GO:0055118">
    <property type="term" value="P:negative regulation of cardiac muscle contraction"/>
    <property type="evidence" value="ECO:0007669"/>
    <property type="project" value="Ensembl"/>
</dbReference>
<dbReference type="GO" id="GO:0010459">
    <property type="term" value="P:negative regulation of heart rate"/>
    <property type="evidence" value="ECO:0000315"/>
    <property type="project" value="BHF-UCL"/>
</dbReference>
<dbReference type="GO" id="GO:0051281">
    <property type="term" value="P:positive regulation of release of sequestered calcium ion into cytosol"/>
    <property type="evidence" value="ECO:0000250"/>
    <property type="project" value="BHF-UCL"/>
</dbReference>
<dbReference type="GO" id="GO:0051924">
    <property type="term" value="P:regulation of calcium ion transport"/>
    <property type="evidence" value="ECO:0000315"/>
    <property type="project" value="BHF-UCL"/>
</dbReference>
<dbReference type="GO" id="GO:0086004">
    <property type="term" value="P:regulation of cardiac muscle cell contraction"/>
    <property type="evidence" value="ECO:0000315"/>
    <property type="project" value="BHF-UCL"/>
</dbReference>
<dbReference type="GO" id="GO:0010649">
    <property type="term" value="P:regulation of cell communication by electrical coupling"/>
    <property type="evidence" value="ECO:0000304"/>
    <property type="project" value="BHF-UCL"/>
</dbReference>
<dbReference type="GO" id="GO:1901844">
    <property type="term" value="P:regulation of cell communication by electrical coupling involved in cardiac conduction"/>
    <property type="evidence" value="ECO:0000315"/>
    <property type="project" value="BHF-UCL"/>
</dbReference>
<dbReference type="GO" id="GO:0061178">
    <property type="term" value="P:regulation of insulin secretion involved in cellular response to glucose stimulus"/>
    <property type="evidence" value="ECO:0000250"/>
    <property type="project" value="BHF-UCL"/>
</dbReference>
<dbReference type="GO" id="GO:1901077">
    <property type="term" value="P:regulation of relaxation of muscle"/>
    <property type="evidence" value="ECO:0000315"/>
    <property type="project" value="BHF-UCL"/>
</dbReference>
<dbReference type="GO" id="GO:0010880">
    <property type="term" value="P:regulation of release of sequestered calcium ion into cytosol by sarcoplasmic reticulum"/>
    <property type="evidence" value="ECO:0000314"/>
    <property type="project" value="BHF-UCL"/>
</dbReference>
<dbReference type="GO" id="GO:0007165">
    <property type="term" value="P:signal transduction"/>
    <property type="evidence" value="ECO:0000304"/>
    <property type="project" value="UniProtKB"/>
</dbReference>
<dbReference type="CDD" id="cd16187">
    <property type="entry name" value="EFh_PEF_sorcin"/>
    <property type="match status" value="1"/>
</dbReference>
<dbReference type="FunFam" id="1.10.238.10:FF:000087">
    <property type="entry name" value="Sorcin"/>
    <property type="match status" value="1"/>
</dbReference>
<dbReference type="Gene3D" id="6.10.140.900">
    <property type="match status" value="1"/>
</dbReference>
<dbReference type="Gene3D" id="1.10.238.10">
    <property type="entry name" value="EF-hand"/>
    <property type="match status" value="1"/>
</dbReference>
<dbReference type="InterPro" id="IPR011992">
    <property type="entry name" value="EF-hand-dom_pair"/>
</dbReference>
<dbReference type="InterPro" id="IPR018247">
    <property type="entry name" value="EF_Hand_1_Ca_BS"/>
</dbReference>
<dbReference type="InterPro" id="IPR002048">
    <property type="entry name" value="EF_hand_dom"/>
</dbReference>
<dbReference type="PANTHER" id="PTHR46735">
    <property type="entry name" value="CALPAIN, SMALL SUBUNIT 1 A-RELATED"/>
    <property type="match status" value="1"/>
</dbReference>
<dbReference type="PANTHER" id="PTHR46735:SF7">
    <property type="entry name" value="SORCIN"/>
    <property type="match status" value="1"/>
</dbReference>
<dbReference type="Pfam" id="PF13499">
    <property type="entry name" value="EF-hand_7"/>
    <property type="match status" value="1"/>
</dbReference>
<dbReference type="Pfam" id="PF13833">
    <property type="entry name" value="EF-hand_8"/>
    <property type="match status" value="1"/>
</dbReference>
<dbReference type="SMART" id="SM00054">
    <property type="entry name" value="EFh"/>
    <property type="match status" value="2"/>
</dbReference>
<dbReference type="SUPFAM" id="SSF47473">
    <property type="entry name" value="EF-hand"/>
    <property type="match status" value="1"/>
</dbReference>
<dbReference type="PROSITE" id="PS00018">
    <property type="entry name" value="EF_HAND_1"/>
    <property type="match status" value="2"/>
</dbReference>
<dbReference type="PROSITE" id="PS50222">
    <property type="entry name" value="EF_HAND_2"/>
    <property type="match status" value="4"/>
</dbReference>
<accession>P30626</accession>
<accession>A8MTH6</accession>
<accession>B4DKK2</accession>
<accession>D6W5Q0</accession>
<gene>
    <name type="primary">SRI</name>
</gene>
<sequence>MAYPGHPGAGGGYYPGGYGGAPGGPAFPGQTQDPLYGYFAAVAGQDGQIDADELQRCLTQSGIAGGYKPFNLETCRLMVSMLDRDMSGTMGFNEFKELWAVLNGWRQHFISFDTDRSGTVDPQELQKALTTMGFRLSPQAVNSIAKRYSTNGKITFDDYIACCVKLRALTDSFRRRDTAQQGVVNFPYDDFIQCVMSV</sequence>
<feature type="chain" id="PRO_0000073725" description="Sorcin">
    <location>
        <begin position="1"/>
        <end position="198"/>
    </location>
</feature>
<feature type="domain" description="EF-hand 1" evidence="1">
    <location>
        <begin position="29"/>
        <end position="64"/>
    </location>
</feature>
<feature type="domain" description="EF-hand 2" evidence="1">
    <location>
        <begin position="70"/>
        <end position="103"/>
    </location>
</feature>
<feature type="domain" description="EF-hand 3" evidence="1">
    <location>
        <begin position="100"/>
        <end position="135"/>
    </location>
</feature>
<feature type="domain" description="EF-hand 4" evidence="1">
    <location>
        <begin position="134"/>
        <end position="169"/>
    </location>
</feature>
<feature type="binding site" evidence="1">
    <location>
        <position position="83"/>
    </location>
    <ligand>
        <name>Ca(2+)</name>
        <dbReference type="ChEBI" id="CHEBI:29108"/>
        <label>1</label>
    </ligand>
</feature>
<feature type="binding site" evidence="1">
    <location>
        <position position="85"/>
    </location>
    <ligand>
        <name>Ca(2+)</name>
        <dbReference type="ChEBI" id="CHEBI:29108"/>
        <label>1</label>
    </ligand>
</feature>
<feature type="binding site" evidence="1">
    <location>
        <position position="87"/>
    </location>
    <ligand>
        <name>Ca(2+)</name>
        <dbReference type="ChEBI" id="CHEBI:29108"/>
        <label>1</label>
    </ligand>
</feature>
<feature type="binding site" evidence="1">
    <location>
        <position position="89"/>
    </location>
    <ligand>
        <name>Ca(2+)</name>
        <dbReference type="ChEBI" id="CHEBI:29108"/>
        <label>1</label>
    </ligand>
</feature>
<feature type="binding site" evidence="1">
    <location>
        <position position="94"/>
    </location>
    <ligand>
        <name>Ca(2+)</name>
        <dbReference type="ChEBI" id="CHEBI:29108"/>
        <label>1</label>
    </ligand>
</feature>
<feature type="binding site" evidence="1">
    <location>
        <position position="113"/>
    </location>
    <ligand>
        <name>Ca(2+)</name>
        <dbReference type="ChEBI" id="CHEBI:29108"/>
        <label>2</label>
    </ligand>
</feature>
<feature type="binding site" evidence="1">
    <location>
        <position position="115"/>
    </location>
    <ligand>
        <name>Ca(2+)</name>
        <dbReference type="ChEBI" id="CHEBI:29108"/>
        <label>2</label>
    </ligand>
</feature>
<feature type="binding site" evidence="1">
    <location>
        <position position="117"/>
    </location>
    <ligand>
        <name>Ca(2+)</name>
        <dbReference type="ChEBI" id="CHEBI:29108"/>
        <label>2</label>
    </ligand>
</feature>
<feature type="binding site" evidence="1">
    <location>
        <position position="119"/>
    </location>
    <ligand>
        <name>Ca(2+)</name>
        <dbReference type="ChEBI" id="CHEBI:29108"/>
        <label>2</label>
    </ligand>
</feature>
<feature type="binding site" evidence="1">
    <location>
        <position position="124"/>
    </location>
    <ligand>
        <name>Ca(2+)</name>
        <dbReference type="ChEBI" id="CHEBI:29108"/>
        <label>2</label>
    </ligand>
</feature>
<feature type="splice variant" id="VSP_046277" description="In isoform 2 and isoform 3." evidence="4 5">
    <original>MAYPGHPGAGGGYYPGG</original>
    <variation>MQ</variation>
    <location>
        <begin position="1"/>
        <end position="17"/>
    </location>
</feature>
<feature type="splice variant" id="VSP_054463" description="In isoform 3." evidence="4">
    <original>FIQCVMSV</original>
    <variation>VSLRN</variation>
    <location>
        <begin position="191"/>
        <end position="198"/>
    </location>
</feature>
<feature type="mutagenesis site" description="Reduces affinity for calcium 5-fold.">
    <original>F</original>
    <variation>L</variation>
    <location>
        <position position="112"/>
    </location>
</feature>
<feature type="helix" evidence="9">
    <location>
        <begin position="28"/>
        <end position="32"/>
    </location>
</feature>
<feature type="helix" evidence="9">
    <location>
        <begin position="36"/>
        <end position="43"/>
    </location>
</feature>
<feature type="helix" evidence="9">
    <location>
        <begin position="44"/>
        <end position="46"/>
    </location>
</feature>
<feature type="helix" evidence="9">
    <location>
        <begin position="51"/>
        <end position="60"/>
    </location>
</feature>
<feature type="turn" evidence="9">
    <location>
        <begin position="61"/>
        <end position="64"/>
    </location>
</feature>
<feature type="strand" evidence="9">
    <location>
        <begin position="66"/>
        <end position="68"/>
    </location>
</feature>
<feature type="helix" evidence="9">
    <location>
        <begin position="72"/>
        <end position="82"/>
    </location>
</feature>
<feature type="strand" evidence="9">
    <location>
        <begin position="84"/>
        <end position="86"/>
    </location>
</feature>
<feature type="strand" evidence="9">
    <location>
        <begin position="88"/>
        <end position="90"/>
    </location>
</feature>
<feature type="helix" evidence="9">
    <location>
        <begin position="92"/>
        <end position="112"/>
    </location>
</feature>
<feature type="strand" evidence="9">
    <location>
        <begin position="118"/>
        <end position="120"/>
    </location>
</feature>
<feature type="helix" evidence="9">
    <location>
        <begin position="122"/>
        <end position="131"/>
    </location>
</feature>
<feature type="helix" evidence="9">
    <location>
        <begin position="138"/>
        <end position="147"/>
    </location>
</feature>
<feature type="strand" evidence="9">
    <location>
        <begin position="149"/>
        <end position="152"/>
    </location>
</feature>
<feature type="strand" evidence="8">
    <location>
        <begin position="153"/>
        <end position="155"/>
    </location>
</feature>
<feature type="helix" evidence="9">
    <location>
        <begin position="156"/>
        <end position="176"/>
    </location>
</feature>
<feature type="helix" evidence="7">
    <location>
        <begin position="178"/>
        <end position="180"/>
    </location>
</feature>
<feature type="strand" evidence="6">
    <location>
        <begin position="182"/>
        <end position="187"/>
    </location>
</feature>
<feature type="helix" evidence="9">
    <location>
        <begin position="188"/>
        <end position="196"/>
    </location>
</feature>
<name>SORCN_HUMAN</name>
<comment type="function">
    <text evidence="3">Calcium-binding protein that modulates excitation-contraction coupling in the heart. Contributes to calcium homeostasis in the heart sarcoplasmic reticulum. Modulates the activity of RYR2 calcium channels.</text>
</comment>
<comment type="subunit">
    <text evidence="2 3">Homodimer. Interacts with GCA, RYR2 and ANXA7.</text>
</comment>
<comment type="interaction">
    <interactant intactId="EBI-750459">
        <id>P30626</id>
    </interactant>
    <interactant intactId="EBI-739580">
        <id>Q13137</id>
        <label>CALCOCO2</label>
    </interactant>
    <organismsDiffer>false</organismsDiffer>
    <experiments>5</experiments>
</comment>
<comment type="interaction">
    <interactant intactId="EBI-750459">
        <id>P30626</id>
    </interactant>
    <interactant intactId="EBI-12169289">
        <id>Q08493-2</id>
        <label>PDE4C</label>
    </interactant>
    <organismsDiffer>false</organismsDiffer>
    <experiments>3</experiments>
</comment>
<comment type="interaction">
    <interactant intactId="EBI-750459">
        <id>P30626</id>
    </interactant>
    <interactant intactId="EBI-10225541">
        <id>Q08493-3</id>
        <label>PDE4C</label>
    </interactant>
    <organismsDiffer>false</organismsDiffer>
    <experiments>3</experiments>
</comment>
<comment type="interaction">
    <interactant intactId="EBI-750459">
        <id>P30626</id>
    </interactant>
    <interactant intactId="EBI-740924">
        <id>Q9NZ81</id>
        <label>PRR13</label>
    </interactant>
    <organismsDiffer>false</organismsDiffer>
    <experiments>3</experiments>
</comment>
<comment type="interaction">
    <interactant intactId="EBI-750459">
        <id>P30626</id>
    </interactant>
    <interactant intactId="EBI-518675">
        <id>P40763</id>
        <label>STAT3</label>
    </interactant>
    <organismsDiffer>false</organismsDiffer>
    <experiments>3</experiments>
</comment>
<comment type="interaction">
    <interactant intactId="EBI-750459">
        <id>P30626</id>
    </interactant>
    <interactant intactId="EBI-722877">
        <id>Q99081</id>
        <label>TCF12</label>
    </interactant>
    <organismsDiffer>false</organismsDiffer>
    <experiments>3</experiments>
</comment>
<comment type="interaction">
    <interactant intactId="EBI-750459">
        <id>P30626</id>
    </interactant>
    <interactant intactId="EBI-739895">
        <id>Q8N6Y0</id>
        <label>USHBP1</label>
    </interactant>
    <organismsDiffer>false</organismsDiffer>
    <experiments>3</experiments>
</comment>
<comment type="interaction">
    <interactant intactId="EBI-10816740">
        <id>P30626-1</id>
    </interactant>
    <interactant intactId="EBI-2338704">
        <id>P20073</id>
        <label>ANXA7</label>
    </interactant>
    <organismsDiffer>false</organismsDiffer>
    <experiments>2</experiments>
</comment>
<comment type="interaction">
    <interactant intactId="EBI-10816740">
        <id>P30626-1</id>
    </interactant>
    <interactant intactId="EBI-10816740">
        <id>P30626-1</id>
        <label>SRI</label>
    </interactant>
    <organismsDiffer>false</organismsDiffer>
    <experiments>4</experiments>
</comment>
<comment type="subcellular location">
    <subcellularLocation>
        <location>Cytoplasm</location>
    </subcellularLocation>
    <subcellularLocation>
        <location>Sarcoplasmic reticulum membrane</location>
        <topology>Peripheral membrane protein</topology>
        <orientation>Cytoplasmic side</orientation>
    </subcellularLocation>
    <text>Relocates to the sarcoplasmic reticulum membrane in response to elevated calcium levels.</text>
</comment>
<comment type="alternative products">
    <event type="alternative splicing"/>
    <isoform>
        <id>P30626-1</id>
        <name>1</name>
        <sequence type="displayed"/>
    </isoform>
    <isoform>
        <id>P30626-2</id>
        <name>2</name>
        <sequence type="described" ref="VSP_046277"/>
    </isoform>
    <isoform>
        <id>P30626-3</id>
        <name>3</name>
        <sequence type="described" ref="VSP_046277 VSP_054463"/>
    </isoform>
</comment>
<comment type="tissue specificity">
    <text>Detected in cardiac myocytes.</text>
</comment>
<comment type="miscellaneous">
    <text>This protein is encoded by an amplified gene in multidrug-resistant cells.</text>
</comment>
<comment type="miscellaneous">
    <text>This protein has been shown to bind calcium with high affinity.</text>
</comment>
<proteinExistence type="evidence at protein level"/>
<organism>
    <name type="scientific">Homo sapiens</name>
    <name type="common">Human</name>
    <dbReference type="NCBI Taxonomy" id="9606"/>
    <lineage>
        <taxon>Eukaryota</taxon>
        <taxon>Metazoa</taxon>
        <taxon>Chordata</taxon>
        <taxon>Craniata</taxon>
        <taxon>Vertebrata</taxon>
        <taxon>Euteleostomi</taxon>
        <taxon>Mammalia</taxon>
        <taxon>Eutheria</taxon>
        <taxon>Euarchontoglires</taxon>
        <taxon>Primates</taxon>
        <taxon>Haplorrhini</taxon>
        <taxon>Catarrhini</taxon>
        <taxon>Hominidae</taxon>
        <taxon>Homo</taxon>
    </lineage>
</organism>